<gene>
    <name type="primary">Parpbp</name>
    <name type="synonym">Pari</name>
</gene>
<comment type="function">
    <text evidence="1">Required to suppress inappropriate homologous recombination, thereby playing a central role DNA repair and in the maintenance of genomic stability. Antagonizes homologous recombination by interfering with the formation of the RAD51-DNA homologous recombination structure. Binds single-strand DNA and poly(A) homopolymers. Positively regulate the poly(ADP-ribosyl)ation activity of PARP1; however such function may be indirect (By similarity).</text>
</comment>
<comment type="subunit">
    <text evidence="2 4">Interacts with RAD51 and PCNA. Interacts with PARP1 (By similarity). Interacts with TASOR (PubMed:31112734).</text>
</comment>
<comment type="subcellular location">
    <subcellularLocation>
        <location evidence="1">Cytoplasm</location>
    </subcellularLocation>
    <subcellularLocation>
        <location evidence="1">Nucleus</location>
    </subcellularLocation>
    <text evidence="1">Localizes to chromatin in response to S phase arrest but not in mitosis. Targeted to chromatin via its interaction with PCNA (By similarity).</text>
</comment>
<comment type="tissue specificity">
    <text evidence="4">Expressed in the ovary, Sertoli cells of the testis and in granular cells within the cerebellum.</text>
</comment>
<comment type="similarity">
    <text evidence="5">Belongs to the PARI family.</text>
</comment>
<comment type="sequence caution" evidence="5">
    <conflict type="erroneous initiation">
        <sequence resource="EMBL-CDS" id="BAC27197"/>
    </conflict>
    <text>Truncated N-terminus.</text>
</comment>
<accession>Q6IRT3</accession>
<accession>Q3UAQ9</accession>
<accession>Q3V278</accession>
<accession>Q8C0J4</accession>
<evidence type="ECO:0000250" key="1"/>
<evidence type="ECO:0000250" key="2">
    <source>
        <dbReference type="UniProtKB" id="Q9NWS1"/>
    </source>
</evidence>
<evidence type="ECO:0000256" key="3">
    <source>
        <dbReference type="SAM" id="MobiDB-lite"/>
    </source>
</evidence>
<evidence type="ECO:0000269" key="4">
    <source>
    </source>
</evidence>
<evidence type="ECO:0000305" key="5"/>
<keyword id="KW-0963">Cytoplasm</keyword>
<keyword id="KW-0227">DNA damage</keyword>
<keyword id="KW-0234">DNA repair</keyword>
<keyword id="KW-0238">DNA-binding</keyword>
<keyword id="KW-0539">Nucleus</keyword>
<keyword id="KW-1185">Reference proteome</keyword>
<proteinExistence type="evidence at protein level"/>
<organism>
    <name type="scientific">Mus musculus</name>
    <name type="common">Mouse</name>
    <dbReference type="NCBI Taxonomy" id="10090"/>
    <lineage>
        <taxon>Eukaryota</taxon>
        <taxon>Metazoa</taxon>
        <taxon>Chordata</taxon>
        <taxon>Craniata</taxon>
        <taxon>Vertebrata</taxon>
        <taxon>Euteleostomi</taxon>
        <taxon>Mammalia</taxon>
        <taxon>Eutheria</taxon>
        <taxon>Euarchontoglires</taxon>
        <taxon>Glires</taxon>
        <taxon>Rodentia</taxon>
        <taxon>Myomorpha</taxon>
        <taxon>Muroidea</taxon>
        <taxon>Muridae</taxon>
        <taxon>Murinae</taxon>
        <taxon>Mus</taxon>
        <taxon>Mus</taxon>
    </lineage>
</organism>
<reference key="1">
    <citation type="journal article" date="2005" name="Science">
        <title>The transcriptional landscape of the mammalian genome.</title>
        <authorList>
            <person name="Carninci P."/>
            <person name="Kasukawa T."/>
            <person name="Katayama S."/>
            <person name="Gough J."/>
            <person name="Frith M.C."/>
            <person name="Maeda N."/>
            <person name="Oyama R."/>
            <person name="Ravasi T."/>
            <person name="Lenhard B."/>
            <person name="Wells C."/>
            <person name="Kodzius R."/>
            <person name="Shimokawa K."/>
            <person name="Bajic V.B."/>
            <person name="Brenner S.E."/>
            <person name="Batalov S."/>
            <person name="Forrest A.R."/>
            <person name="Zavolan M."/>
            <person name="Davis M.J."/>
            <person name="Wilming L.G."/>
            <person name="Aidinis V."/>
            <person name="Allen J.E."/>
            <person name="Ambesi-Impiombato A."/>
            <person name="Apweiler R."/>
            <person name="Aturaliya R.N."/>
            <person name="Bailey T.L."/>
            <person name="Bansal M."/>
            <person name="Baxter L."/>
            <person name="Beisel K.W."/>
            <person name="Bersano T."/>
            <person name="Bono H."/>
            <person name="Chalk A.M."/>
            <person name="Chiu K.P."/>
            <person name="Choudhary V."/>
            <person name="Christoffels A."/>
            <person name="Clutterbuck D.R."/>
            <person name="Crowe M.L."/>
            <person name="Dalla E."/>
            <person name="Dalrymple B.P."/>
            <person name="de Bono B."/>
            <person name="Della Gatta G."/>
            <person name="di Bernardo D."/>
            <person name="Down T."/>
            <person name="Engstrom P."/>
            <person name="Fagiolini M."/>
            <person name="Faulkner G."/>
            <person name="Fletcher C.F."/>
            <person name="Fukushima T."/>
            <person name="Furuno M."/>
            <person name="Futaki S."/>
            <person name="Gariboldi M."/>
            <person name="Georgii-Hemming P."/>
            <person name="Gingeras T.R."/>
            <person name="Gojobori T."/>
            <person name="Green R.E."/>
            <person name="Gustincich S."/>
            <person name="Harbers M."/>
            <person name="Hayashi Y."/>
            <person name="Hensch T.K."/>
            <person name="Hirokawa N."/>
            <person name="Hill D."/>
            <person name="Huminiecki L."/>
            <person name="Iacono M."/>
            <person name="Ikeo K."/>
            <person name="Iwama A."/>
            <person name="Ishikawa T."/>
            <person name="Jakt M."/>
            <person name="Kanapin A."/>
            <person name="Katoh M."/>
            <person name="Kawasawa Y."/>
            <person name="Kelso J."/>
            <person name="Kitamura H."/>
            <person name="Kitano H."/>
            <person name="Kollias G."/>
            <person name="Krishnan S.P."/>
            <person name="Kruger A."/>
            <person name="Kummerfeld S.K."/>
            <person name="Kurochkin I.V."/>
            <person name="Lareau L.F."/>
            <person name="Lazarevic D."/>
            <person name="Lipovich L."/>
            <person name="Liu J."/>
            <person name="Liuni S."/>
            <person name="McWilliam S."/>
            <person name="Madan Babu M."/>
            <person name="Madera M."/>
            <person name="Marchionni L."/>
            <person name="Matsuda H."/>
            <person name="Matsuzawa S."/>
            <person name="Miki H."/>
            <person name="Mignone F."/>
            <person name="Miyake S."/>
            <person name="Morris K."/>
            <person name="Mottagui-Tabar S."/>
            <person name="Mulder N."/>
            <person name="Nakano N."/>
            <person name="Nakauchi H."/>
            <person name="Ng P."/>
            <person name="Nilsson R."/>
            <person name="Nishiguchi S."/>
            <person name="Nishikawa S."/>
            <person name="Nori F."/>
            <person name="Ohara O."/>
            <person name="Okazaki Y."/>
            <person name="Orlando V."/>
            <person name="Pang K.C."/>
            <person name="Pavan W.J."/>
            <person name="Pavesi G."/>
            <person name="Pesole G."/>
            <person name="Petrovsky N."/>
            <person name="Piazza S."/>
            <person name="Reed J."/>
            <person name="Reid J.F."/>
            <person name="Ring B.Z."/>
            <person name="Ringwald M."/>
            <person name="Rost B."/>
            <person name="Ruan Y."/>
            <person name="Salzberg S.L."/>
            <person name="Sandelin A."/>
            <person name="Schneider C."/>
            <person name="Schoenbach C."/>
            <person name="Sekiguchi K."/>
            <person name="Semple C.A."/>
            <person name="Seno S."/>
            <person name="Sessa L."/>
            <person name="Sheng Y."/>
            <person name="Shibata Y."/>
            <person name="Shimada H."/>
            <person name="Shimada K."/>
            <person name="Silva D."/>
            <person name="Sinclair B."/>
            <person name="Sperling S."/>
            <person name="Stupka E."/>
            <person name="Sugiura K."/>
            <person name="Sultana R."/>
            <person name="Takenaka Y."/>
            <person name="Taki K."/>
            <person name="Tammoja K."/>
            <person name="Tan S.L."/>
            <person name="Tang S."/>
            <person name="Taylor M.S."/>
            <person name="Tegner J."/>
            <person name="Teichmann S.A."/>
            <person name="Ueda H.R."/>
            <person name="van Nimwegen E."/>
            <person name="Verardo R."/>
            <person name="Wei C.L."/>
            <person name="Yagi K."/>
            <person name="Yamanishi H."/>
            <person name="Zabarovsky E."/>
            <person name="Zhu S."/>
            <person name="Zimmer A."/>
            <person name="Hide W."/>
            <person name="Bult C."/>
            <person name="Grimmond S.M."/>
            <person name="Teasdale R.D."/>
            <person name="Liu E.T."/>
            <person name="Brusic V."/>
            <person name="Quackenbush J."/>
            <person name="Wahlestedt C."/>
            <person name="Mattick J.S."/>
            <person name="Hume D.A."/>
            <person name="Kai C."/>
            <person name="Sasaki D."/>
            <person name="Tomaru Y."/>
            <person name="Fukuda S."/>
            <person name="Kanamori-Katayama M."/>
            <person name="Suzuki M."/>
            <person name="Aoki J."/>
            <person name="Arakawa T."/>
            <person name="Iida J."/>
            <person name="Imamura K."/>
            <person name="Itoh M."/>
            <person name="Kato T."/>
            <person name="Kawaji H."/>
            <person name="Kawagashira N."/>
            <person name="Kawashima T."/>
            <person name="Kojima M."/>
            <person name="Kondo S."/>
            <person name="Konno H."/>
            <person name="Nakano K."/>
            <person name="Ninomiya N."/>
            <person name="Nishio T."/>
            <person name="Okada M."/>
            <person name="Plessy C."/>
            <person name="Shibata K."/>
            <person name="Shiraki T."/>
            <person name="Suzuki S."/>
            <person name="Tagami M."/>
            <person name="Waki K."/>
            <person name="Watahiki A."/>
            <person name="Okamura-Oho Y."/>
            <person name="Suzuki H."/>
            <person name="Kawai J."/>
            <person name="Hayashizaki Y."/>
        </authorList>
    </citation>
    <scope>NUCLEOTIDE SEQUENCE [LARGE SCALE MRNA]</scope>
    <source>
        <strain>C57BL/6J</strain>
        <tissue>Bone marrow</tissue>
        <tissue>Thymus</tissue>
    </source>
</reference>
<reference key="2">
    <citation type="journal article" date="2004" name="Genome Res.">
        <title>The status, quality, and expansion of the NIH full-length cDNA project: the Mammalian Gene Collection (MGC).</title>
        <authorList>
            <consortium name="The MGC Project Team"/>
        </authorList>
    </citation>
    <scope>NUCLEOTIDE SEQUENCE [LARGE SCALE MRNA]</scope>
    <source>
        <strain>C57BL/6J</strain>
        <tissue>Head</tissue>
    </source>
</reference>
<reference key="3">
    <citation type="journal article" date="2019" name="Exp. Cell Res.">
        <title>Fam208a orchestrates interaction protein network essential for early embryonic development and cell division.</title>
        <authorList>
            <person name="Gresakova V."/>
            <person name="Novosadova V."/>
            <person name="Prochazkova M."/>
            <person name="Bhargava S."/>
            <person name="Jenickova I."/>
            <person name="Prochazka J."/>
            <person name="Sedlacek R."/>
        </authorList>
    </citation>
    <scope>INTERACTION WITH TASOR</scope>
    <scope>TISSUE SPECIFICITY</scope>
</reference>
<name>PARI_MOUSE</name>
<dbReference type="EMBL" id="AK030970">
    <property type="protein sequence ID" value="BAC27197.1"/>
    <property type="status" value="ALT_INIT"/>
    <property type="molecule type" value="mRNA"/>
</dbReference>
<dbReference type="EMBL" id="AK131981">
    <property type="protein sequence ID" value="BAE20920.1"/>
    <property type="molecule type" value="mRNA"/>
</dbReference>
<dbReference type="EMBL" id="AK150571">
    <property type="protein sequence ID" value="BAE29666.1"/>
    <property type="molecule type" value="mRNA"/>
</dbReference>
<dbReference type="EMBL" id="AK151268">
    <property type="protein sequence ID" value="BAE30255.1"/>
    <property type="molecule type" value="mRNA"/>
</dbReference>
<dbReference type="EMBL" id="AK152208">
    <property type="protein sequence ID" value="BAE31036.1"/>
    <property type="molecule type" value="mRNA"/>
</dbReference>
<dbReference type="EMBL" id="BC070476">
    <property type="protein sequence ID" value="AAH70476.2"/>
    <property type="molecule type" value="mRNA"/>
</dbReference>
<dbReference type="CCDS" id="CCDS36022.1"/>
<dbReference type="RefSeq" id="NP_083525.1">
    <property type="nucleotide sequence ID" value="NM_029249.2"/>
</dbReference>
<dbReference type="SMR" id="Q6IRT3"/>
<dbReference type="BioGRID" id="217389">
    <property type="interactions" value="1"/>
</dbReference>
<dbReference type="FunCoup" id="Q6IRT3">
    <property type="interactions" value="1246"/>
</dbReference>
<dbReference type="IntAct" id="Q6IRT3">
    <property type="interactions" value="1"/>
</dbReference>
<dbReference type="STRING" id="10090.ENSMUSP00000038375"/>
<dbReference type="iPTMnet" id="Q6IRT3"/>
<dbReference type="PhosphoSitePlus" id="Q6IRT3"/>
<dbReference type="PaxDb" id="10090-ENSMUSP00000038375"/>
<dbReference type="ProteomicsDB" id="287781"/>
<dbReference type="GeneID" id="75317"/>
<dbReference type="KEGG" id="mmu:75317"/>
<dbReference type="UCSC" id="uc007grd.1">
    <property type="organism name" value="mouse"/>
</dbReference>
<dbReference type="AGR" id="MGI:1922567"/>
<dbReference type="CTD" id="55010"/>
<dbReference type="MGI" id="MGI:1922567">
    <property type="gene designation" value="Parpbp"/>
</dbReference>
<dbReference type="eggNOG" id="ENOG502QR2U">
    <property type="taxonomic scope" value="Eukaryota"/>
</dbReference>
<dbReference type="InParanoid" id="Q6IRT3"/>
<dbReference type="OrthoDB" id="6427080at2759"/>
<dbReference type="PhylomeDB" id="Q6IRT3"/>
<dbReference type="TreeFam" id="TF332230"/>
<dbReference type="BioGRID-ORCS" id="75317">
    <property type="hits" value="1 hit in 114 CRISPR screens"/>
</dbReference>
<dbReference type="ChiTaRS" id="Parpbp">
    <property type="organism name" value="mouse"/>
</dbReference>
<dbReference type="PRO" id="PR:Q6IRT3"/>
<dbReference type="Proteomes" id="UP000000589">
    <property type="component" value="Unplaced"/>
</dbReference>
<dbReference type="RNAct" id="Q6IRT3">
    <property type="molecule type" value="protein"/>
</dbReference>
<dbReference type="GO" id="GO:0000785">
    <property type="term" value="C:chromatin"/>
    <property type="evidence" value="ECO:0000250"/>
    <property type="project" value="UniProtKB"/>
</dbReference>
<dbReference type="GO" id="GO:0005737">
    <property type="term" value="C:cytoplasm"/>
    <property type="evidence" value="ECO:0007669"/>
    <property type="project" value="UniProtKB-SubCell"/>
</dbReference>
<dbReference type="GO" id="GO:0005634">
    <property type="term" value="C:nucleus"/>
    <property type="evidence" value="ECO:0007669"/>
    <property type="project" value="UniProtKB-SubCell"/>
</dbReference>
<dbReference type="GO" id="GO:0003677">
    <property type="term" value="F:DNA binding"/>
    <property type="evidence" value="ECO:0007669"/>
    <property type="project" value="UniProtKB-KW"/>
</dbReference>
<dbReference type="GO" id="GO:0006281">
    <property type="term" value="P:DNA repair"/>
    <property type="evidence" value="ECO:0007669"/>
    <property type="project" value="UniProtKB-KW"/>
</dbReference>
<dbReference type="GO" id="GO:2000042">
    <property type="term" value="P:negative regulation of double-strand break repair via homologous recombination"/>
    <property type="evidence" value="ECO:0000250"/>
    <property type="project" value="UniProtKB"/>
</dbReference>
<dbReference type="FunFam" id="1.10.486.10:FF:000004">
    <property type="entry name" value="PCNA-interacting partner isoform X3"/>
    <property type="match status" value="1"/>
</dbReference>
<dbReference type="Gene3D" id="1.10.486.10">
    <property type="entry name" value="PCRA, domain 4"/>
    <property type="match status" value="1"/>
</dbReference>
<dbReference type="InterPro" id="IPR027417">
    <property type="entry name" value="P-loop_NTPase"/>
</dbReference>
<dbReference type="InterPro" id="IPR038932">
    <property type="entry name" value="PARPBP"/>
</dbReference>
<dbReference type="PANTHER" id="PTHR32121">
    <property type="entry name" value="PCNA-INTERACTING PARTNER"/>
    <property type="match status" value="1"/>
</dbReference>
<dbReference type="PANTHER" id="PTHR32121:SF0">
    <property type="entry name" value="PCNA-INTERACTING PARTNER"/>
    <property type="match status" value="1"/>
</dbReference>
<dbReference type="SUPFAM" id="SSF52540">
    <property type="entry name" value="P-loop containing nucleoside triphosphate hydrolases"/>
    <property type="match status" value="1"/>
</dbReference>
<sequence>MAVLNQLPVLGMIKEFRRSWRALCSSERTTLCGPDSMLLALQLSMAENNKQHRGEFTVCLSDVLLTWKYFLHEKLNLPIENMKVVEHYEDIKKTYDDFLKNSNTLDLIDVYKKCSSLTSNYENNMISPIQLRDFLSGTEYAVSDEANPHMPESPVKCSQNDEQVRVLVKKIFFSYLSLLVNSKNDLALASILNIPDRGLGREAFTNLKHAAREKQLSMFLMATSFIRTLELGGKGYAPSPSDPLWAHVKGLSEFINFIDKLDEILGKIPNPSLAGSRILSAIKMQLIKGHSSGEPFYKAVEEVVQDLNLRIKNIINSQEGVAVSANNISPVPPKSFAINHDTAYCGRDAVKILLVLLDEDAASAPTRNKAELLYNDESTVPHSGPSVLTLFRSPTQEKNTSVKPLRERIHKSLQTEKNKMWQTLIRSQFACTYKDDCIMSKNKWHVNSSSKPLSALHLEDDVSEGAQSSVGKARIEASSENAHVGRWKGDKLPRKSTQRQISKGKQLDLDSENLHCDRGNELYQHKNIKIPKVPSGSHSKAGGKLAQGTKGNRCPARGKLIPGQTKLTQFFML</sequence>
<protein>
    <recommendedName>
        <fullName>PCNA-interacting partner</fullName>
        <shortName>PARI</shortName>
    </recommendedName>
    <alternativeName>
        <fullName>PARP-1 binding protein</fullName>
    </alternativeName>
    <alternativeName>
        <fullName>PARP1-binding protein</fullName>
        <shortName>PARPBP</shortName>
    </alternativeName>
</protein>
<feature type="chain" id="PRO_0000280270" description="PCNA-interacting partner">
    <location>
        <begin position="1"/>
        <end position="573"/>
    </location>
</feature>
<feature type="region of interest" description="Disordered" evidence="3">
    <location>
        <begin position="470"/>
        <end position="505"/>
    </location>
</feature>
<feature type="region of interest" description="Disordered" evidence="3">
    <location>
        <begin position="531"/>
        <end position="560"/>
    </location>
</feature>
<feature type="sequence conflict" description="In Ref. 1; BAE20920." evidence="5" ref="1">
    <original>Q</original>
    <variation>H</variation>
    <location>
        <position position="215"/>
    </location>
</feature>
<feature type="sequence conflict" description="In Ref. 1; BAE20920/BAC27197 and 2; AAH70476." evidence="5" ref="1 2">
    <original>G</original>
    <variation>R</variation>
    <location>
        <position position="504"/>
    </location>
</feature>
<feature type="sequence conflict" description="In Ref. 1; BAE20920." evidence="5" ref="1">
    <original>D</original>
    <variation>Y</variation>
    <location>
        <position position="508"/>
    </location>
</feature>